<feature type="chain" id="PRO_0000304345" description="Leucyl/phenylalanyl-tRNA--protein transferase">
    <location>
        <begin position="1"/>
        <end position="234"/>
    </location>
</feature>
<reference key="1">
    <citation type="journal article" date="2007" name="Environ. Microbiol.">
        <title>Whole-genome analysis of the ammonia-oxidizing bacterium, Nitrosomonas eutropha C91: implications for niche adaptation.</title>
        <authorList>
            <person name="Stein L.Y."/>
            <person name="Arp D.J."/>
            <person name="Berube P.M."/>
            <person name="Chain P.S."/>
            <person name="Hauser L."/>
            <person name="Jetten M.S."/>
            <person name="Klotz M.G."/>
            <person name="Larimer F.W."/>
            <person name="Norton J.M."/>
            <person name="Op den Camp H.J.M."/>
            <person name="Shin M."/>
            <person name="Wei X."/>
        </authorList>
    </citation>
    <scope>NUCLEOTIDE SEQUENCE [LARGE SCALE GENOMIC DNA]</scope>
    <source>
        <strain>DSM 101675 / C91 / Nm57</strain>
    </source>
</reference>
<organism>
    <name type="scientific">Nitrosomonas eutropha (strain DSM 101675 / C91 / Nm57)</name>
    <dbReference type="NCBI Taxonomy" id="335283"/>
    <lineage>
        <taxon>Bacteria</taxon>
        <taxon>Pseudomonadati</taxon>
        <taxon>Pseudomonadota</taxon>
        <taxon>Betaproteobacteria</taxon>
        <taxon>Nitrosomonadales</taxon>
        <taxon>Nitrosomonadaceae</taxon>
        <taxon>Nitrosomonas</taxon>
    </lineage>
</organism>
<keyword id="KW-0012">Acyltransferase</keyword>
<keyword id="KW-0963">Cytoplasm</keyword>
<keyword id="KW-0808">Transferase</keyword>
<gene>
    <name evidence="1" type="primary">aat</name>
    <name type="ordered locus">Neut_0648</name>
</gene>
<sequence length="234" mass="26658">MIRTLFSDTPFPPLEQALIEPNGLLAAGGDLSPERLISAYQQGIFPWFNQGEVILWWSPNPRMVLFPQELKISRSLHKTLKKNHYQIRTDSAFTQVMQACAAPREKQTGTWIHPEMVAAYTTLHQRGIAHSVETWVDGELVGGLYGVAIGKAFFGESMFSRVPDASKIALVYLARQLERQGYGLIDCQMKTAHLMSMGAREIPRLQFSKLLGKLTDQPEQNRKWHFDFTWPKQQ</sequence>
<protein>
    <recommendedName>
        <fullName evidence="1">Leucyl/phenylalanyl-tRNA--protein transferase</fullName>
        <ecNumber evidence="1">2.3.2.6</ecNumber>
    </recommendedName>
    <alternativeName>
        <fullName evidence="1">L/F-transferase</fullName>
    </alternativeName>
    <alternativeName>
        <fullName evidence="1">Leucyltransferase</fullName>
    </alternativeName>
    <alternativeName>
        <fullName evidence="1">Phenyalanyltransferase</fullName>
    </alternativeName>
</protein>
<proteinExistence type="inferred from homology"/>
<comment type="function">
    <text evidence="1">Functions in the N-end rule pathway of protein degradation where it conjugates Leu, Phe and, less efficiently, Met from aminoacyl-tRNAs to the N-termini of proteins containing an N-terminal arginine or lysine.</text>
</comment>
<comment type="catalytic activity">
    <reaction evidence="1">
        <text>N-terminal L-lysyl-[protein] + L-leucyl-tRNA(Leu) = N-terminal L-leucyl-L-lysyl-[protein] + tRNA(Leu) + H(+)</text>
        <dbReference type="Rhea" id="RHEA:12340"/>
        <dbReference type="Rhea" id="RHEA-COMP:9613"/>
        <dbReference type="Rhea" id="RHEA-COMP:9622"/>
        <dbReference type="Rhea" id="RHEA-COMP:12670"/>
        <dbReference type="Rhea" id="RHEA-COMP:12671"/>
        <dbReference type="ChEBI" id="CHEBI:15378"/>
        <dbReference type="ChEBI" id="CHEBI:65249"/>
        <dbReference type="ChEBI" id="CHEBI:78442"/>
        <dbReference type="ChEBI" id="CHEBI:78494"/>
        <dbReference type="ChEBI" id="CHEBI:133043"/>
        <dbReference type="EC" id="2.3.2.6"/>
    </reaction>
</comment>
<comment type="catalytic activity">
    <reaction evidence="1">
        <text>N-terminal L-arginyl-[protein] + L-leucyl-tRNA(Leu) = N-terminal L-leucyl-L-arginyl-[protein] + tRNA(Leu) + H(+)</text>
        <dbReference type="Rhea" id="RHEA:50416"/>
        <dbReference type="Rhea" id="RHEA-COMP:9613"/>
        <dbReference type="Rhea" id="RHEA-COMP:9622"/>
        <dbReference type="Rhea" id="RHEA-COMP:12672"/>
        <dbReference type="Rhea" id="RHEA-COMP:12673"/>
        <dbReference type="ChEBI" id="CHEBI:15378"/>
        <dbReference type="ChEBI" id="CHEBI:64719"/>
        <dbReference type="ChEBI" id="CHEBI:78442"/>
        <dbReference type="ChEBI" id="CHEBI:78494"/>
        <dbReference type="ChEBI" id="CHEBI:133044"/>
        <dbReference type="EC" id="2.3.2.6"/>
    </reaction>
</comment>
<comment type="catalytic activity">
    <reaction evidence="1">
        <text>L-phenylalanyl-tRNA(Phe) + an N-terminal L-alpha-aminoacyl-[protein] = an N-terminal L-phenylalanyl-L-alpha-aminoacyl-[protein] + tRNA(Phe)</text>
        <dbReference type="Rhea" id="RHEA:43632"/>
        <dbReference type="Rhea" id="RHEA-COMP:9668"/>
        <dbReference type="Rhea" id="RHEA-COMP:9699"/>
        <dbReference type="Rhea" id="RHEA-COMP:10636"/>
        <dbReference type="Rhea" id="RHEA-COMP:10637"/>
        <dbReference type="ChEBI" id="CHEBI:78442"/>
        <dbReference type="ChEBI" id="CHEBI:78531"/>
        <dbReference type="ChEBI" id="CHEBI:78597"/>
        <dbReference type="ChEBI" id="CHEBI:83561"/>
        <dbReference type="EC" id="2.3.2.6"/>
    </reaction>
</comment>
<comment type="subcellular location">
    <subcellularLocation>
        <location evidence="1">Cytoplasm</location>
    </subcellularLocation>
</comment>
<comment type="similarity">
    <text evidence="1">Belongs to the L/F-transferase family.</text>
</comment>
<name>LFTR_NITEC</name>
<accession>Q0AIB2</accession>
<evidence type="ECO:0000255" key="1">
    <source>
        <dbReference type="HAMAP-Rule" id="MF_00688"/>
    </source>
</evidence>
<dbReference type="EC" id="2.3.2.6" evidence="1"/>
<dbReference type="EMBL" id="CP000450">
    <property type="protein sequence ID" value="ABI58920.1"/>
    <property type="molecule type" value="Genomic_DNA"/>
</dbReference>
<dbReference type="RefSeq" id="WP_011633761.1">
    <property type="nucleotide sequence ID" value="NC_008344.1"/>
</dbReference>
<dbReference type="SMR" id="Q0AIB2"/>
<dbReference type="STRING" id="335283.Neut_0648"/>
<dbReference type="KEGG" id="net:Neut_0648"/>
<dbReference type="eggNOG" id="COG2360">
    <property type="taxonomic scope" value="Bacteria"/>
</dbReference>
<dbReference type="HOGENOM" id="CLU_075045_0_0_4"/>
<dbReference type="OrthoDB" id="9790282at2"/>
<dbReference type="Proteomes" id="UP000001966">
    <property type="component" value="Chromosome"/>
</dbReference>
<dbReference type="GO" id="GO:0005737">
    <property type="term" value="C:cytoplasm"/>
    <property type="evidence" value="ECO:0007669"/>
    <property type="project" value="UniProtKB-SubCell"/>
</dbReference>
<dbReference type="GO" id="GO:0008914">
    <property type="term" value="F:leucyl-tRNA--protein transferase activity"/>
    <property type="evidence" value="ECO:0007669"/>
    <property type="project" value="UniProtKB-UniRule"/>
</dbReference>
<dbReference type="GO" id="GO:0030163">
    <property type="term" value="P:protein catabolic process"/>
    <property type="evidence" value="ECO:0007669"/>
    <property type="project" value="UniProtKB-UniRule"/>
</dbReference>
<dbReference type="FunFam" id="3.30.70.3550:FF:000001">
    <property type="entry name" value="Leucyl/phenylalanyl-tRNA--protein transferase"/>
    <property type="match status" value="1"/>
</dbReference>
<dbReference type="FunFam" id="3.40.630.70:FF:000001">
    <property type="entry name" value="Leucyl/phenylalanyl-tRNA--protein transferase"/>
    <property type="match status" value="1"/>
</dbReference>
<dbReference type="Gene3D" id="3.40.630.70">
    <property type="entry name" value="Leucyl/phenylalanyl-tRNA-protein transferase, C-terminal domain"/>
    <property type="match status" value="1"/>
</dbReference>
<dbReference type="Gene3D" id="3.30.70.3550">
    <property type="entry name" value="Leucyl/phenylalanyl-tRNA-protein transferase, N-terminal domain"/>
    <property type="match status" value="1"/>
</dbReference>
<dbReference type="HAMAP" id="MF_00688">
    <property type="entry name" value="Leu_Phe_trans"/>
    <property type="match status" value="1"/>
</dbReference>
<dbReference type="InterPro" id="IPR016181">
    <property type="entry name" value="Acyl_CoA_acyltransferase"/>
</dbReference>
<dbReference type="InterPro" id="IPR004616">
    <property type="entry name" value="Leu/Phe-tRNA_Trfase"/>
</dbReference>
<dbReference type="InterPro" id="IPR042203">
    <property type="entry name" value="Leu/Phe-tRNA_Trfase_C"/>
</dbReference>
<dbReference type="InterPro" id="IPR042221">
    <property type="entry name" value="Leu/Phe-tRNA_Trfase_N"/>
</dbReference>
<dbReference type="NCBIfam" id="TIGR00667">
    <property type="entry name" value="aat"/>
    <property type="match status" value="1"/>
</dbReference>
<dbReference type="PANTHER" id="PTHR30098">
    <property type="entry name" value="LEUCYL/PHENYLALANYL-TRNA--PROTEIN TRANSFERASE"/>
    <property type="match status" value="1"/>
</dbReference>
<dbReference type="PANTHER" id="PTHR30098:SF2">
    <property type="entry name" value="LEUCYL_PHENYLALANYL-TRNA--PROTEIN TRANSFERASE"/>
    <property type="match status" value="1"/>
</dbReference>
<dbReference type="Pfam" id="PF03588">
    <property type="entry name" value="Leu_Phe_trans"/>
    <property type="match status" value="1"/>
</dbReference>
<dbReference type="SUPFAM" id="SSF55729">
    <property type="entry name" value="Acyl-CoA N-acyltransferases (Nat)"/>
    <property type="match status" value="1"/>
</dbReference>